<reference key="1">
    <citation type="journal article" date="2003" name="Nat. Biotechnol.">
        <title>The genome sequence of the entomopathogenic bacterium Photorhabdus luminescens.</title>
        <authorList>
            <person name="Duchaud E."/>
            <person name="Rusniok C."/>
            <person name="Frangeul L."/>
            <person name="Buchrieser C."/>
            <person name="Givaudan A."/>
            <person name="Taourit S."/>
            <person name="Bocs S."/>
            <person name="Boursaux-Eude C."/>
            <person name="Chandler M."/>
            <person name="Charles J.-F."/>
            <person name="Dassa E."/>
            <person name="Derose R."/>
            <person name="Derzelle S."/>
            <person name="Freyssinet G."/>
            <person name="Gaudriault S."/>
            <person name="Medigue C."/>
            <person name="Lanois A."/>
            <person name="Powell K."/>
            <person name="Siguier P."/>
            <person name="Vincent R."/>
            <person name="Wingate V."/>
            <person name="Zouine M."/>
            <person name="Glaser P."/>
            <person name="Boemare N."/>
            <person name="Danchin A."/>
            <person name="Kunst F."/>
        </authorList>
    </citation>
    <scope>NUCLEOTIDE SEQUENCE [LARGE SCALE GENOMIC DNA]</scope>
    <source>
        <strain>DSM 15139 / CIP 105565 / TT01</strain>
    </source>
</reference>
<comment type="function">
    <text evidence="1">This protein is one of the two subunits of integration host factor, a specific DNA-binding protein that functions in genetic recombination as well as in transcriptional and translational control.</text>
</comment>
<comment type="subunit">
    <text evidence="1">Heterodimer of an alpha and a beta chain.</text>
</comment>
<comment type="similarity">
    <text evidence="1">Belongs to the bacterial histone-like protein family.</text>
</comment>
<gene>
    <name evidence="1" type="primary">ihfB</name>
    <name evidence="1" type="synonym">himD</name>
    <name type="ordered locus">plu1623</name>
</gene>
<protein>
    <recommendedName>
        <fullName evidence="1">Integration host factor subunit beta</fullName>
        <shortName evidence="1">IHF-beta</shortName>
    </recommendedName>
</protein>
<evidence type="ECO:0000255" key="1">
    <source>
        <dbReference type="HAMAP-Rule" id="MF_00381"/>
    </source>
</evidence>
<sequence length="94" mass="10648">MTKSELIERLAGQQSHISAKTVEDAVKEILDHMAITLADGERIEVRGFGSFSLHYRAPRVGRNPKTGDKVELEGKYVPHFKPGKELRDRVNIYD</sequence>
<dbReference type="EMBL" id="BX571864">
    <property type="protein sequence ID" value="CAE13916.1"/>
    <property type="molecule type" value="Genomic_DNA"/>
</dbReference>
<dbReference type="RefSeq" id="WP_011145915.1">
    <property type="nucleotide sequence ID" value="NC_005126.1"/>
</dbReference>
<dbReference type="SMR" id="Q7N6D2"/>
<dbReference type="STRING" id="243265.plu1623"/>
<dbReference type="GeneID" id="88805681"/>
<dbReference type="KEGG" id="plu:plu1623"/>
<dbReference type="eggNOG" id="COG0776">
    <property type="taxonomic scope" value="Bacteria"/>
</dbReference>
<dbReference type="HOGENOM" id="CLU_105066_2_0_6"/>
<dbReference type="OrthoDB" id="9804203at2"/>
<dbReference type="Proteomes" id="UP000002514">
    <property type="component" value="Chromosome"/>
</dbReference>
<dbReference type="GO" id="GO:0005694">
    <property type="term" value="C:chromosome"/>
    <property type="evidence" value="ECO:0007669"/>
    <property type="project" value="InterPro"/>
</dbReference>
<dbReference type="GO" id="GO:0005829">
    <property type="term" value="C:cytosol"/>
    <property type="evidence" value="ECO:0007669"/>
    <property type="project" value="TreeGrafter"/>
</dbReference>
<dbReference type="GO" id="GO:0003677">
    <property type="term" value="F:DNA binding"/>
    <property type="evidence" value="ECO:0007669"/>
    <property type="project" value="UniProtKB-UniRule"/>
</dbReference>
<dbReference type="GO" id="GO:0030527">
    <property type="term" value="F:structural constituent of chromatin"/>
    <property type="evidence" value="ECO:0007669"/>
    <property type="project" value="InterPro"/>
</dbReference>
<dbReference type="GO" id="GO:0006310">
    <property type="term" value="P:DNA recombination"/>
    <property type="evidence" value="ECO:0007669"/>
    <property type="project" value="UniProtKB-UniRule"/>
</dbReference>
<dbReference type="GO" id="GO:0006355">
    <property type="term" value="P:regulation of DNA-templated transcription"/>
    <property type="evidence" value="ECO:0007669"/>
    <property type="project" value="UniProtKB-UniRule"/>
</dbReference>
<dbReference type="GO" id="GO:0006417">
    <property type="term" value="P:regulation of translation"/>
    <property type="evidence" value="ECO:0007669"/>
    <property type="project" value="UniProtKB-UniRule"/>
</dbReference>
<dbReference type="CDD" id="cd13836">
    <property type="entry name" value="IHF_B"/>
    <property type="match status" value="1"/>
</dbReference>
<dbReference type="FunFam" id="4.10.520.10:FF:000003">
    <property type="entry name" value="Integration host factor subunit beta"/>
    <property type="match status" value="1"/>
</dbReference>
<dbReference type="Gene3D" id="4.10.520.10">
    <property type="entry name" value="IHF-like DNA-binding proteins"/>
    <property type="match status" value="1"/>
</dbReference>
<dbReference type="HAMAP" id="MF_00381">
    <property type="entry name" value="IHF_beta"/>
    <property type="match status" value="1"/>
</dbReference>
<dbReference type="InterPro" id="IPR000119">
    <property type="entry name" value="Hist_DNA-bd"/>
</dbReference>
<dbReference type="InterPro" id="IPR020816">
    <property type="entry name" value="Histone-like_DNA-bd_CS"/>
</dbReference>
<dbReference type="InterPro" id="IPR010992">
    <property type="entry name" value="IHF-like_DNA-bd_dom_sf"/>
</dbReference>
<dbReference type="InterPro" id="IPR005685">
    <property type="entry name" value="IHF_beta"/>
</dbReference>
<dbReference type="NCBIfam" id="TIGR00988">
    <property type="entry name" value="hip"/>
    <property type="match status" value="1"/>
</dbReference>
<dbReference type="NCBIfam" id="NF001222">
    <property type="entry name" value="PRK00199.1"/>
    <property type="match status" value="1"/>
</dbReference>
<dbReference type="PANTHER" id="PTHR33175">
    <property type="entry name" value="DNA-BINDING PROTEIN HU"/>
    <property type="match status" value="1"/>
</dbReference>
<dbReference type="PANTHER" id="PTHR33175:SF5">
    <property type="entry name" value="INTEGRATION HOST FACTOR SUBUNIT BETA"/>
    <property type="match status" value="1"/>
</dbReference>
<dbReference type="Pfam" id="PF00216">
    <property type="entry name" value="Bac_DNA_binding"/>
    <property type="match status" value="1"/>
</dbReference>
<dbReference type="PRINTS" id="PR01727">
    <property type="entry name" value="DNABINDINGHU"/>
</dbReference>
<dbReference type="SMART" id="SM00411">
    <property type="entry name" value="BHL"/>
    <property type="match status" value="1"/>
</dbReference>
<dbReference type="SUPFAM" id="SSF47729">
    <property type="entry name" value="IHF-like DNA-binding proteins"/>
    <property type="match status" value="1"/>
</dbReference>
<dbReference type="PROSITE" id="PS00045">
    <property type="entry name" value="HISTONE_LIKE"/>
    <property type="match status" value="1"/>
</dbReference>
<keyword id="KW-0233">DNA recombination</keyword>
<keyword id="KW-0238">DNA-binding</keyword>
<keyword id="KW-1185">Reference proteome</keyword>
<keyword id="KW-0804">Transcription</keyword>
<keyword id="KW-0805">Transcription regulation</keyword>
<keyword id="KW-0810">Translation regulation</keyword>
<proteinExistence type="inferred from homology"/>
<accession>Q7N6D2</accession>
<feature type="chain" id="PRO_1000060626" description="Integration host factor subunit beta">
    <location>
        <begin position="1"/>
        <end position="94"/>
    </location>
</feature>
<organism>
    <name type="scientific">Photorhabdus laumondii subsp. laumondii (strain DSM 15139 / CIP 105565 / TT01)</name>
    <name type="common">Photorhabdus luminescens subsp. laumondii</name>
    <dbReference type="NCBI Taxonomy" id="243265"/>
    <lineage>
        <taxon>Bacteria</taxon>
        <taxon>Pseudomonadati</taxon>
        <taxon>Pseudomonadota</taxon>
        <taxon>Gammaproteobacteria</taxon>
        <taxon>Enterobacterales</taxon>
        <taxon>Morganellaceae</taxon>
        <taxon>Photorhabdus</taxon>
    </lineage>
</organism>
<name>IHFB_PHOLL</name>